<organism>
    <name type="scientific">Oryza sativa subsp. japonica</name>
    <name type="common">Rice</name>
    <dbReference type="NCBI Taxonomy" id="39947"/>
    <lineage>
        <taxon>Eukaryota</taxon>
        <taxon>Viridiplantae</taxon>
        <taxon>Streptophyta</taxon>
        <taxon>Embryophyta</taxon>
        <taxon>Tracheophyta</taxon>
        <taxon>Spermatophyta</taxon>
        <taxon>Magnoliopsida</taxon>
        <taxon>Liliopsida</taxon>
        <taxon>Poales</taxon>
        <taxon>Poaceae</taxon>
        <taxon>BOP clade</taxon>
        <taxon>Oryzoideae</taxon>
        <taxon>Oryzeae</taxon>
        <taxon>Oryzinae</taxon>
        <taxon>Oryza</taxon>
        <taxon>Oryza sativa</taxon>
    </lineage>
</organism>
<reference key="1">
    <citation type="journal article" date="2002" name="Nature">
        <title>The genome sequence and structure of rice chromosome 1.</title>
        <authorList>
            <person name="Sasaki T."/>
            <person name="Matsumoto T."/>
            <person name="Yamamoto K."/>
            <person name="Sakata K."/>
            <person name="Baba T."/>
            <person name="Katayose Y."/>
            <person name="Wu J."/>
            <person name="Niimura Y."/>
            <person name="Cheng Z."/>
            <person name="Nagamura Y."/>
            <person name="Antonio B.A."/>
            <person name="Kanamori H."/>
            <person name="Hosokawa S."/>
            <person name="Masukawa M."/>
            <person name="Arikawa K."/>
            <person name="Chiden Y."/>
            <person name="Hayashi M."/>
            <person name="Okamoto M."/>
            <person name="Ando T."/>
            <person name="Aoki H."/>
            <person name="Arita K."/>
            <person name="Hamada M."/>
            <person name="Harada C."/>
            <person name="Hijishita S."/>
            <person name="Honda M."/>
            <person name="Ichikawa Y."/>
            <person name="Idonuma A."/>
            <person name="Iijima M."/>
            <person name="Ikeda M."/>
            <person name="Ikeno M."/>
            <person name="Ito S."/>
            <person name="Ito T."/>
            <person name="Ito Y."/>
            <person name="Ito Y."/>
            <person name="Iwabuchi A."/>
            <person name="Kamiya K."/>
            <person name="Karasawa W."/>
            <person name="Katagiri S."/>
            <person name="Kikuta A."/>
            <person name="Kobayashi N."/>
            <person name="Kono I."/>
            <person name="Machita K."/>
            <person name="Maehara T."/>
            <person name="Mizuno H."/>
            <person name="Mizubayashi T."/>
            <person name="Mukai Y."/>
            <person name="Nagasaki H."/>
            <person name="Nakashima M."/>
            <person name="Nakama Y."/>
            <person name="Nakamichi Y."/>
            <person name="Nakamura M."/>
            <person name="Namiki N."/>
            <person name="Negishi M."/>
            <person name="Ohta I."/>
            <person name="Ono N."/>
            <person name="Saji S."/>
            <person name="Sakai K."/>
            <person name="Shibata M."/>
            <person name="Shimokawa T."/>
            <person name="Shomura A."/>
            <person name="Song J."/>
            <person name="Takazaki Y."/>
            <person name="Terasawa K."/>
            <person name="Tsuji K."/>
            <person name="Waki K."/>
            <person name="Yamagata H."/>
            <person name="Yamane H."/>
            <person name="Yoshiki S."/>
            <person name="Yoshihara R."/>
            <person name="Yukawa K."/>
            <person name="Zhong H."/>
            <person name="Iwama H."/>
            <person name="Endo T."/>
            <person name="Ito H."/>
            <person name="Hahn J.H."/>
            <person name="Kim H.-I."/>
            <person name="Eun M.-Y."/>
            <person name="Yano M."/>
            <person name="Jiang J."/>
            <person name="Gojobori T."/>
        </authorList>
    </citation>
    <scope>NUCLEOTIDE SEQUENCE [LARGE SCALE GENOMIC DNA]</scope>
    <source>
        <strain>cv. Nipponbare</strain>
    </source>
</reference>
<reference key="2">
    <citation type="journal article" date="2005" name="Nature">
        <title>The map-based sequence of the rice genome.</title>
        <authorList>
            <consortium name="International rice genome sequencing project (IRGSP)"/>
        </authorList>
    </citation>
    <scope>NUCLEOTIDE SEQUENCE [LARGE SCALE GENOMIC DNA]</scope>
    <source>
        <strain>cv. Nipponbare</strain>
    </source>
</reference>
<reference key="3">
    <citation type="journal article" date="2008" name="Nucleic Acids Res.">
        <title>The rice annotation project database (RAP-DB): 2008 update.</title>
        <authorList>
            <consortium name="The rice annotation project (RAP)"/>
        </authorList>
    </citation>
    <scope>GENOME REANNOTATION</scope>
    <source>
        <strain>cv. Nipponbare</strain>
    </source>
</reference>
<reference key="4">
    <citation type="journal article" date="2013" name="Rice">
        <title>Improvement of the Oryza sativa Nipponbare reference genome using next generation sequence and optical map data.</title>
        <authorList>
            <person name="Kawahara Y."/>
            <person name="de la Bastide M."/>
            <person name="Hamilton J.P."/>
            <person name="Kanamori H."/>
            <person name="McCombie W.R."/>
            <person name="Ouyang S."/>
            <person name="Schwartz D.C."/>
            <person name="Tanaka T."/>
            <person name="Wu J."/>
            <person name="Zhou S."/>
            <person name="Childs K.L."/>
            <person name="Davidson R.M."/>
            <person name="Lin H."/>
            <person name="Quesada-Ocampo L."/>
            <person name="Vaillancourt B."/>
            <person name="Sakai H."/>
            <person name="Lee S.S."/>
            <person name="Kim J."/>
            <person name="Numa H."/>
            <person name="Itoh T."/>
            <person name="Buell C.R."/>
            <person name="Matsumoto T."/>
        </authorList>
    </citation>
    <scope>GENOME REANNOTATION</scope>
    <source>
        <strain>cv. Nipponbare</strain>
    </source>
</reference>
<gene>
    <name type="ordered locus">Os01g0875500</name>
    <name type="ordered locus">LOC_Os01g65460</name>
    <name type="ORF">P0648C09.21</name>
    <name type="ORF">P0698A10.24</name>
</gene>
<name>BGAL3_ORYSJ</name>
<accession>Q5N8X6</accession>
<accession>Q8RYX9</accession>
<sequence length="851" mass="94710">MAGASSYFSLRRLLLLLLPLVPLLGATTAAAAGANSSVTYDHRSLIISGRRRLLISTSIHYPRSVPEMWPKLVAEAKDGGADCVETYVFWNGHEPAQGQYYFEERFDLVRFAKIVKDAGLYMILRIGPFVAAEWTFGGVPVWLHYAPGTVFRTNNEPFKSHMKRFTTYIVDMMKKEQFFASQGGHIILAQVENEYGDMEQAYGAGAKPYAMWAASMALAQNTGVPWIMCQQYDAPDPVINTCNSFYCDQFKPNSPTKPKFWTENWPGWFQTFGESNPHRPPEDVAFSVARFFGKGGSLQNYYVYHGGTNFGRTTGGPFITTSYDYDAPIDEYGLRRLPKWAHLRDLHKSIKLGEHTLLYGNSSFVSLGPQQEADVYTDQSGGCVAFLSNVDSEKDKVVTFQSRSYDLPAWSVSILPDCKNVAFNTAKVRSQTLMMDMVPANLESSKVDGWSIFREKYGIWGNIDLVRNGFVDHINTTKDSTDYLWYTTSFDVDGSHLAGGNHVLHIESKGHAVQAFLNNELIGSAYGNGSKSNFSVEMPVNLRAGKNKLSLLSMTVGLQNGGPMYEWAGAGITSVKISGMENRIIDLSSNKWEYKIGLEGEYYSLFKADKGKDIRWMPQSEPPKNQPMTWYKVNVDVPQGDDPVGLDMQSMGKGLAWLNGNAIGRYWPRISPVSDRCTSSCDYRGTFSPNKCRRGCGQPTQRWYHVPRSWFHPSGNTLVIFEEKGGDPTKITFSRRTVASVCSFVSEHYPSIDLESWDRNTQNDGRDAAKVQLSCPKGKSISSVKFVSFGNPSGTCRSYQQGSCHHPNSISVVEKACLNMNGCTVSLSDEGFGEDLCPGVTKTLAIEADCS</sequence>
<protein>
    <recommendedName>
        <fullName>Beta-galactosidase 3</fullName>
        <shortName>Lactase 3</shortName>
        <ecNumber>3.2.1.23</ecNumber>
    </recommendedName>
</protein>
<comment type="catalytic activity">
    <reaction>
        <text>Hydrolysis of terminal non-reducing beta-D-galactose residues in beta-D-galactosides.</text>
        <dbReference type="EC" id="3.2.1.23"/>
    </reaction>
</comment>
<comment type="subcellular location">
    <subcellularLocation>
        <location evidence="3">Secreted</location>
        <location evidence="3">Extracellular space</location>
        <location evidence="3">Apoplast</location>
    </subcellularLocation>
</comment>
<comment type="similarity">
    <text evidence="3">Belongs to the glycosyl hydrolase 35 family.</text>
</comment>
<comment type="sequence caution" evidence="3">
    <conflict type="erroneous gene model prediction">
        <sequence resource="EMBL-CDS" id="BAB86232"/>
    </conflict>
</comment>
<keyword id="KW-0052">Apoplast</keyword>
<keyword id="KW-0325">Glycoprotein</keyword>
<keyword id="KW-0326">Glycosidase</keyword>
<keyword id="KW-0378">Hydrolase</keyword>
<keyword id="KW-1185">Reference proteome</keyword>
<keyword id="KW-0964">Secreted</keyword>
<keyword id="KW-0732">Signal</keyword>
<evidence type="ECO:0000255" key="1"/>
<evidence type="ECO:0000255" key="2">
    <source>
        <dbReference type="PROSITE-ProRule" id="PRU00260"/>
    </source>
</evidence>
<evidence type="ECO:0000305" key="3"/>
<dbReference type="EC" id="3.2.1.23"/>
<dbReference type="EMBL" id="AP003297">
    <property type="protein sequence ID" value="BAD82087.1"/>
    <property type="molecule type" value="Genomic_DNA"/>
</dbReference>
<dbReference type="EMBL" id="AP003922">
    <property type="protein sequence ID" value="BAB86232.1"/>
    <property type="status" value="ALT_SEQ"/>
    <property type="molecule type" value="Genomic_DNA"/>
</dbReference>
<dbReference type="EMBL" id="AP008207">
    <property type="protein sequence ID" value="BAF06878.1"/>
    <property type="molecule type" value="Genomic_DNA"/>
</dbReference>
<dbReference type="EMBL" id="AP014957">
    <property type="status" value="NOT_ANNOTATED_CDS"/>
    <property type="molecule type" value="Genomic_DNA"/>
</dbReference>
<dbReference type="SMR" id="Q5N8X6"/>
<dbReference type="FunCoup" id="Q5N8X6">
    <property type="interactions" value="71"/>
</dbReference>
<dbReference type="STRING" id="39947.Q5N8X6"/>
<dbReference type="CAZy" id="GH35">
    <property type="family name" value="Glycoside Hydrolase Family 35"/>
</dbReference>
<dbReference type="PaxDb" id="39947-Q5N8X6"/>
<dbReference type="KEGG" id="dosa:Os01g0875500"/>
<dbReference type="eggNOG" id="KOG0496">
    <property type="taxonomic scope" value="Eukaryota"/>
</dbReference>
<dbReference type="HOGENOM" id="CLU_007853_4_0_1"/>
<dbReference type="InParanoid" id="Q5N8X6"/>
<dbReference type="Proteomes" id="UP000000763">
    <property type="component" value="Chromosome 1"/>
</dbReference>
<dbReference type="Proteomes" id="UP000059680">
    <property type="component" value="Chromosome 1"/>
</dbReference>
<dbReference type="GO" id="GO:0048046">
    <property type="term" value="C:apoplast"/>
    <property type="evidence" value="ECO:0007669"/>
    <property type="project" value="UniProtKB-SubCell"/>
</dbReference>
<dbReference type="GO" id="GO:0009505">
    <property type="term" value="C:plant-type cell wall"/>
    <property type="evidence" value="ECO:0000318"/>
    <property type="project" value="GO_Central"/>
</dbReference>
<dbReference type="GO" id="GO:0005773">
    <property type="term" value="C:vacuole"/>
    <property type="evidence" value="ECO:0000318"/>
    <property type="project" value="GO_Central"/>
</dbReference>
<dbReference type="GO" id="GO:0004565">
    <property type="term" value="F:beta-galactosidase activity"/>
    <property type="evidence" value="ECO:0000318"/>
    <property type="project" value="GO_Central"/>
</dbReference>
<dbReference type="GO" id="GO:0030246">
    <property type="term" value="F:carbohydrate binding"/>
    <property type="evidence" value="ECO:0007669"/>
    <property type="project" value="InterPro"/>
</dbReference>
<dbReference type="GO" id="GO:0019388">
    <property type="term" value="P:galactose catabolic process"/>
    <property type="evidence" value="ECO:0000318"/>
    <property type="project" value="GO_Central"/>
</dbReference>
<dbReference type="GO" id="GO:0009827">
    <property type="term" value="P:plant-type cell wall modification"/>
    <property type="evidence" value="ECO:0000318"/>
    <property type="project" value="GO_Central"/>
</dbReference>
<dbReference type="CDD" id="cd22842">
    <property type="entry name" value="Gal_Rha_Lectin_BGal"/>
    <property type="match status" value="1"/>
</dbReference>
<dbReference type="FunFam" id="2.60.120.260:FF:000097">
    <property type="entry name" value="Beta-galactosidase"/>
    <property type="match status" value="1"/>
</dbReference>
<dbReference type="FunFam" id="2.60.120.740:FF:000002">
    <property type="entry name" value="Beta-galactosidase"/>
    <property type="match status" value="1"/>
</dbReference>
<dbReference type="FunFam" id="3.20.20.80:FF:000006">
    <property type="entry name" value="Beta-galactosidase"/>
    <property type="match status" value="1"/>
</dbReference>
<dbReference type="FunFam" id="2.60.120.260:FF:000171">
    <property type="entry name" value="Beta-galactosidase 3"/>
    <property type="match status" value="1"/>
</dbReference>
<dbReference type="Gene3D" id="2.60.120.740">
    <property type="match status" value="1"/>
</dbReference>
<dbReference type="Gene3D" id="2.60.120.260">
    <property type="entry name" value="Galactose-binding domain-like"/>
    <property type="match status" value="2"/>
</dbReference>
<dbReference type="Gene3D" id="3.20.20.80">
    <property type="entry name" value="Glycosidases"/>
    <property type="match status" value="1"/>
</dbReference>
<dbReference type="InterPro" id="IPR048913">
    <property type="entry name" value="BetaGal_gal-bd"/>
</dbReference>
<dbReference type="InterPro" id="IPR008979">
    <property type="entry name" value="Galactose-bd-like_sf"/>
</dbReference>
<dbReference type="InterPro" id="IPR041392">
    <property type="entry name" value="GHD"/>
</dbReference>
<dbReference type="InterPro" id="IPR031330">
    <property type="entry name" value="Gly_Hdrlase_35_cat"/>
</dbReference>
<dbReference type="InterPro" id="IPR001944">
    <property type="entry name" value="Glycoside_Hdrlase_35"/>
</dbReference>
<dbReference type="InterPro" id="IPR017853">
    <property type="entry name" value="Glycoside_hydrolase_SF"/>
</dbReference>
<dbReference type="InterPro" id="IPR000922">
    <property type="entry name" value="Lectin_gal-bd_dom"/>
</dbReference>
<dbReference type="InterPro" id="IPR043159">
    <property type="entry name" value="Lectin_gal-bd_sf"/>
</dbReference>
<dbReference type="PANTHER" id="PTHR23421">
    <property type="entry name" value="BETA-GALACTOSIDASE RELATED"/>
    <property type="match status" value="1"/>
</dbReference>
<dbReference type="Pfam" id="PF21467">
    <property type="entry name" value="BetaGal_gal-bd"/>
    <property type="match status" value="1"/>
</dbReference>
<dbReference type="Pfam" id="PF17834">
    <property type="entry name" value="GHD"/>
    <property type="match status" value="1"/>
</dbReference>
<dbReference type="Pfam" id="PF01301">
    <property type="entry name" value="Glyco_hydro_35"/>
    <property type="match status" value="1"/>
</dbReference>
<dbReference type="Pfam" id="PF02140">
    <property type="entry name" value="SUEL_Lectin"/>
    <property type="match status" value="1"/>
</dbReference>
<dbReference type="PRINTS" id="PR00742">
    <property type="entry name" value="GLHYDRLASE35"/>
</dbReference>
<dbReference type="SUPFAM" id="SSF51445">
    <property type="entry name" value="(Trans)glycosidases"/>
    <property type="match status" value="1"/>
</dbReference>
<dbReference type="SUPFAM" id="SSF49785">
    <property type="entry name" value="Galactose-binding domain-like"/>
    <property type="match status" value="2"/>
</dbReference>
<dbReference type="PROSITE" id="PS50228">
    <property type="entry name" value="SUEL_LECTIN"/>
    <property type="match status" value="1"/>
</dbReference>
<feature type="signal peptide" evidence="1">
    <location>
        <begin position="1"/>
        <end position="29"/>
    </location>
</feature>
<feature type="chain" id="PRO_0000294154" description="Beta-galactosidase 3">
    <location>
        <begin position="30"/>
        <end position="851"/>
    </location>
</feature>
<feature type="domain" description="SUEL-type lectin" evidence="2">
    <location>
        <begin position="765"/>
        <end position="851"/>
    </location>
</feature>
<feature type="active site" description="Proton donor" evidence="1">
    <location>
        <position position="194"/>
    </location>
</feature>
<feature type="active site" description="Nucleophile" evidence="1">
    <location>
        <position position="263"/>
    </location>
</feature>
<feature type="glycosylation site" description="N-linked (GlcNAc...) asparagine" evidence="1">
    <location>
        <position position="35"/>
    </location>
</feature>
<feature type="glycosylation site" description="N-linked (GlcNAc...) asparagine" evidence="1">
    <location>
        <position position="361"/>
    </location>
</feature>
<feature type="glycosylation site" description="N-linked (GlcNAc...) asparagine" evidence="1">
    <location>
        <position position="475"/>
    </location>
</feature>
<feature type="glycosylation site" description="N-linked (GlcNAc...) asparagine" evidence="1">
    <location>
        <position position="528"/>
    </location>
</feature>
<feature type="glycosylation site" description="N-linked (GlcNAc...) asparagine" evidence="1">
    <location>
        <position position="533"/>
    </location>
</feature>
<proteinExistence type="inferred from homology"/>